<comment type="function">
    <text evidence="1">Catalyzes the oxidative decarboxylation of isocitrate to 2-oxoglutarate and carbon dioxide with the concomitant reduction of NADP(+).</text>
</comment>
<comment type="catalytic activity">
    <reaction evidence="1">
        <text>D-threo-isocitrate + NADP(+) = 2-oxoglutarate + CO2 + NADPH</text>
        <dbReference type="Rhea" id="RHEA:19629"/>
        <dbReference type="ChEBI" id="CHEBI:15562"/>
        <dbReference type="ChEBI" id="CHEBI:16526"/>
        <dbReference type="ChEBI" id="CHEBI:16810"/>
        <dbReference type="ChEBI" id="CHEBI:57783"/>
        <dbReference type="ChEBI" id="CHEBI:58349"/>
        <dbReference type="EC" id="1.1.1.42"/>
    </reaction>
</comment>
<comment type="cofactor">
    <cofactor evidence="1">
        <name>Mg(2+)</name>
        <dbReference type="ChEBI" id="CHEBI:18420"/>
    </cofactor>
    <cofactor evidence="1">
        <name>Mn(2+)</name>
        <dbReference type="ChEBI" id="CHEBI:29035"/>
    </cofactor>
    <text evidence="1">Binds 1 Mg(2+) or Mn(2+) ion per subunit.</text>
</comment>
<comment type="subunit">
    <text evidence="1">Homodimer.</text>
</comment>
<comment type="similarity">
    <text evidence="2">Belongs to the isocitrate and isopropylmalate dehydrogenases family.</text>
</comment>
<accession>Q6G8N2</accession>
<evidence type="ECO:0000250" key="1">
    <source>
        <dbReference type="UniProtKB" id="P08200"/>
    </source>
</evidence>
<evidence type="ECO:0000305" key="2"/>
<organism>
    <name type="scientific">Staphylococcus aureus (strain MSSA476)</name>
    <dbReference type="NCBI Taxonomy" id="282459"/>
    <lineage>
        <taxon>Bacteria</taxon>
        <taxon>Bacillati</taxon>
        <taxon>Bacillota</taxon>
        <taxon>Bacilli</taxon>
        <taxon>Bacillales</taxon>
        <taxon>Staphylococcaceae</taxon>
        <taxon>Staphylococcus</taxon>
    </lineage>
</organism>
<dbReference type="EC" id="1.1.1.42" evidence="1"/>
<dbReference type="EMBL" id="BX571857">
    <property type="protein sequence ID" value="CAG43424.1"/>
    <property type="molecule type" value="Genomic_DNA"/>
</dbReference>
<dbReference type="RefSeq" id="WP_000123164.1">
    <property type="nucleotide sequence ID" value="NC_002953.3"/>
</dbReference>
<dbReference type="SMR" id="Q6G8N2"/>
<dbReference type="KEGG" id="sas:SAS1622"/>
<dbReference type="HOGENOM" id="CLU_031953_7_1_9"/>
<dbReference type="GO" id="GO:0004450">
    <property type="term" value="F:isocitrate dehydrogenase (NADP+) activity"/>
    <property type="evidence" value="ECO:0007669"/>
    <property type="project" value="UniProtKB-EC"/>
</dbReference>
<dbReference type="GO" id="GO:0000287">
    <property type="term" value="F:magnesium ion binding"/>
    <property type="evidence" value="ECO:0007669"/>
    <property type="project" value="InterPro"/>
</dbReference>
<dbReference type="GO" id="GO:0051287">
    <property type="term" value="F:NAD binding"/>
    <property type="evidence" value="ECO:0007669"/>
    <property type="project" value="InterPro"/>
</dbReference>
<dbReference type="GO" id="GO:0006097">
    <property type="term" value="P:glyoxylate cycle"/>
    <property type="evidence" value="ECO:0007669"/>
    <property type="project" value="UniProtKB-KW"/>
</dbReference>
<dbReference type="GO" id="GO:0006099">
    <property type="term" value="P:tricarboxylic acid cycle"/>
    <property type="evidence" value="ECO:0007669"/>
    <property type="project" value="UniProtKB-KW"/>
</dbReference>
<dbReference type="Gene3D" id="3.40.718.10">
    <property type="entry name" value="Isopropylmalate Dehydrogenase"/>
    <property type="match status" value="1"/>
</dbReference>
<dbReference type="InterPro" id="IPR019818">
    <property type="entry name" value="IsoCit/isopropylmalate_DH_CS"/>
</dbReference>
<dbReference type="InterPro" id="IPR004439">
    <property type="entry name" value="Isocitrate_DH_NADP_dimer_prok"/>
</dbReference>
<dbReference type="InterPro" id="IPR024084">
    <property type="entry name" value="IsoPropMal-DH-like_dom"/>
</dbReference>
<dbReference type="NCBIfam" id="NF005425">
    <property type="entry name" value="PRK07006.1"/>
    <property type="match status" value="1"/>
</dbReference>
<dbReference type="NCBIfam" id="TIGR00183">
    <property type="entry name" value="prok_nadp_idh"/>
    <property type="match status" value="1"/>
</dbReference>
<dbReference type="PANTHER" id="PTHR43504">
    <property type="entry name" value="ISOCITRATE DEHYDROGENASE [NADP]"/>
    <property type="match status" value="1"/>
</dbReference>
<dbReference type="PANTHER" id="PTHR43504:SF1">
    <property type="entry name" value="ISOCITRATE DEHYDROGENASE [NADP]"/>
    <property type="match status" value="1"/>
</dbReference>
<dbReference type="Pfam" id="PF00180">
    <property type="entry name" value="Iso_dh"/>
    <property type="match status" value="1"/>
</dbReference>
<dbReference type="SMART" id="SM01329">
    <property type="entry name" value="Iso_dh"/>
    <property type="match status" value="1"/>
</dbReference>
<dbReference type="SUPFAM" id="SSF53659">
    <property type="entry name" value="Isocitrate/Isopropylmalate dehydrogenase-like"/>
    <property type="match status" value="1"/>
</dbReference>
<dbReference type="PROSITE" id="PS00470">
    <property type="entry name" value="IDH_IMDH"/>
    <property type="match status" value="1"/>
</dbReference>
<feature type="chain" id="PRO_0000083563" description="Isocitrate dehydrogenase [NADP]">
    <location>
        <begin position="1"/>
        <end position="422"/>
    </location>
</feature>
<feature type="binding site" evidence="1">
    <location>
        <position position="94"/>
    </location>
    <ligand>
        <name>NADP(+)</name>
        <dbReference type="ChEBI" id="CHEBI:58349"/>
    </ligand>
</feature>
<feature type="binding site" evidence="1">
    <location>
        <position position="103"/>
    </location>
    <ligand>
        <name>D-threo-isocitrate</name>
        <dbReference type="ChEBI" id="CHEBI:15562"/>
    </ligand>
</feature>
<feature type="binding site" evidence="1">
    <location>
        <position position="105"/>
    </location>
    <ligand>
        <name>D-threo-isocitrate</name>
        <dbReference type="ChEBI" id="CHEBI:15562"/>
    </ligand>
</feature>
<feature type="binding site" evidence="1">
    <location>
        <position position="109"/>
    </location>
    <ligand>
        <name>D-threo-isocitrate</name>
        <dbReference type="ChEBI" id="CHEBI:15562"/>
    </ligand>
</feature>
<feature type="binding site" evidence="1">
    <location>
        <position position="119"/>
    </location>
    <ligand>
        <name>D-threo-isocitrate</name>
        <dbReference type="ChEBI" id="CHEBI:15562"/>
    </ligand>
</feature>
<feature type="binding site" evidence="1">
    <location>
        <position position="143"/>
    </location>
    <ligand>
        <name>D-threo-isocitrate</name>
        <dbReference type="ChEBI" id="CHEBI:15562"/>
    </ligand>
</feature>
<feature type="binding site" evidence="1">
    <location>
        <position position="310"/>
    </location>
    <ligand>
        <name>Mg(2+)</name>
        <dbReference type="ChEBI" id="CHEBI:18420"/>
    </ligand>
</feature>
<feature type="binding site" evidence="1">
    <location>
        <begin position="344"/>
        <end position="350"/>
    </location>
    <ligand>
        <name>NADP(+)</name>
        <dbReference type="ChEBI" id="CHEBI:58349"/>
    </ligand>
</feature>
<feature type="binding site" evidence="1">
    <location>
        <position position="357"/>
    </location>
    <ligand>
        <name>NADP(+)</name>
        <dbReference type="ChEBI" id="CHEBI:58349"/>
    </ligand>
</feature>
<feature type="binding site" evidence="1">
    <location>
        <position position="396"/>
    </location>
    <ligand>
        <name>NADP(+)</name>
        <dbReference type="ChEBI" id="CHEBI:58349"/>
    </ligand>
</feature>
<feature type="binding site" evidence="1">
    <location>
        <position position="400"/>
    </location>
    <ligand>
        <name>NADP(+)</name>
        <dbReference type="ChEBI" id="CHEBI:58349"/>
    </ligand>
</feature>
<feature type="site" description="Critical for catalysis" evidence="1">
    <location>
        <position position="150"/>
    </location>
</feature>
<feature type="site" description="Critical for catalysis" evidence="1">
    <location>
        <position position="220"/>
    </location>
</feature>
<name>IDH_STAAS</name>
<gene>
    <name type="primary">icd</name>
    <name type="synonym">citC</name>
    <name type="ordered locus">SAS1622</name>
</gene>
<sequence>MTAEKITQGTEGLNVPNEPIIPFIIGDGIGPDIWKAASRVIDAAVEKAYNGEKRIEWKEVLAGQKAFDTTGEWLPQETLDTIKEYLIAVKGPLTTPIGGGIRSLNVALRQELDLFTCLRPVRWFKGVPSPVKRPQDVDMVIFRENTEDIYAGIEFKEGTTEVKKVIDFLQNEMGATNIRFPETSGIGIKPVSKEGTERLVRAAIQYAIDNNRKSVTLVHKGNIMKFTEGSFKQWGYDLALSEFGDQVFTWQQYDEIVEKEGRDAANAAQEKAEKEGKIIIKDSIADIFLQQILTRPAEHDVVATMNLNGDYISDALAAQVGGIGIAPGANINYETGHAIFEATHGTAPKYAGLNKVNPSSVILSSVLMLEHLGWQEAADKITDSIEDTIASKVVTYDFARLMDGAEEVSTSAFADELIKNLK</sequence>
<keyword id="KW-0329">Glyoxylate bypass</keyword>
<keyword id="KW-0460">Magnesium</keyword>
<keyword id="KW-0464">Manganese</keyword>
<keyword id="KW-0479">Metal-binding</keyword>
<keyword id="KW-0521">NADP</keyword>
<keyword id="KW-0560">Oxidoreductase</keyword>
<keyword id="KW-0816">Tricarboxylic acid cycle</keyword>
<proteinExistence type="inferred from homology"/>
<reference key="1">
    <citation type="journal article" date="2004" name="Proc. Natl. Acad. Sci. U.S.A.">
        <title>Complete genomes of two clinical Staphylococcus aureus strains: evidence for the rapid evolution of virulence and drug resistance.</title>
        <authorList>
            <person name="Holden M.T.G."/>
            <person name="Feil E.J."/>
            <person name="Lindsay J.A."/>
            <person name="Peacock S.J."/>
            <person name="Day N.P.J."/>
            <person name="Enright M.C."/>
            <person name="Foster T.J."/>
            <person name="Moore C.E."/>
            <person name="Hurst L."/>
            <person name="Atkin R."/>
            <person name="Barron A."/>
            <person name="Bason N."/>
            <person name="Bentley S.D."/>
            <person name="Chillingworth C."/>
            <person name="Chillingworth T."/>
            <person name="Churcher C."/>
            <person name="Clark L."/>
            <person name="Corton C."/>
            <person name="Cronin A."/>
            <person name="Doggett J."/>
            <person name="Dowd L."/>
            <person name="Feltwell T."/>
            <person name="Hance Z."/>
            <person name="Harris B."/>
            <person name="Hauser H."/>
            <person name="Holroyd S."/>
            <person name="Jagels K."/>
            <person name="James K.D."/>
            <person name="Lennard N."/>
            <person name="Line A."/>
            <person name="Mayes R."/>
            <person name="Moule S."/>
            <person name="Mungall K."/>
            <person name="Ormond D."/>
            <person name="Quail M.A."/>
            <person name="Rabbinowitsch E."/>
            <person name="Rutherford K.M."/>
            <person name="Sanders M."/>
            <person name="Sharp S."/>
            <person name="Simmonds M."/>
            <person name="Stevens K."/>
            <person name="Whitehead S."/>
            <person name="Barrell B.G."/>
            <person name="Spratt B.G."/>
            <person name="Parkhill J."/>
        </authorList>
    </citation>
    <scope>NUCLEOTIDE SEQUENCE [LARGE SCALE GENOMIC DNA]</scope>
    <source>
        <strain>MSSA476</strain>
    </source>
</reference>
<protein>
    <recommendedName>
        <fullName>Isocitrate dehydrogenase [NADP]</fullName>
        <shortName>IDH</shortName>
        <ecNumber evidence="1">1.1.1.42</ecNumber>
    </recommendedName>
    <alternativeName>
        <fullName>IDP</fullName>
    </alternativeName>
    <alternativeName>
        <fullName>NADP(+)-specific ICDH</fullName>
    </alternativeName>
    <alternativeName>
        <fullName>Oxalosuccinate decarboxylase</fullName>
    </alternativeName>
</protein>